<feature type="chain" id="PRO_0000258239" description="Large ribosomal subunit protein uL11">
    <location>
        <begin position="1"/>
        <end position="142"/>
    </location>
</feature>
<gene>
    <name evidence="1" type="primary">rplK</name>
    <name type="ordered locus">XC_3351</name>
</gene>
<keyword id="KW-0488">Methylation</keyword>
<keyword id="KW-0687">Ribonucleoprotein</keyword>
<keyword id="KW-0689">Ribosomal protein</keyword>
<keyword id="KW-0694">RNA-binding</keyword>
<keyword id="KW-0699">rRNA-binding</keyword>
<accession>Q4URC8</accession>
<comment type="function">
    <text evidence="1">Forms part of the ribosomal stalk which helps the ribosome interact with GTP-bound translation factors.</text>
</comment>
<comment type="subunit">
    <text evidence="1">Part of the ribosomal stalk of the 50S ribosomal subunit. Interacts with L10 and the large rRNA to form the base of the stalk. L10 forms an elongated spine to which L12 dimers bind in a sequential fashion forming a multimeric L10(L12)X complex.</text>
</comment>
<comment type="PTM">
    <text evidence="1">One or more lysine residues are methylated.</text>
</comment>
<comment type="similarity">
    <text evidence="1">Belongs to the universal ribosomal protein uL11 family.</text>
</comment>
<organism>
    <name type="scientific">Xanthomonas campestris pv. campestris (strain 8004)</name>
    <dbReference type="NCBI Taxonomy" id="314565"/>
    <lineage>
        <taxon>Bacteria</taxon>
        <taxon>Pseudomonadati</taxon>
        <taxon>Pseudomonadota</taxon>
        <taxon>Gammaproteobacteria</taxon>
        <taxon>Lysobacterales</taxon>
        <taxon>Lysobacteraceae</taxon>
        <taxon>Xanthomonas</taxon>
    </lineage>
</organism>
<dbReference type="EMBL" id="CP000050">
    <property type="protein sequence ID" value="AAY50395.1"/>
    <property type="molecule type" value="Genomic_DNA"/>
</dbReference>
<dbReference type="RefSeq" id="WP_011036114.1">
    <property type="nucleotide sequence ID" value="NZ_CP155948.1"/>
</dbReference>
<dbReference type="SMR" id="Q4URC8"/>
<dbReference type="KEGG" id="xcb:XC_3351"/>
<dbReference type="HOGENOM" id="CLU_074237_2_0_6"/>
<dbReference type="Proteomes" id="UP000000420">
    <property type="component" value="Chromosome"/>
</dbReference>
<dbReference type="GO" id="GO:0022625">
    <property type="term" value="C:cytosolic large ribosomal subunit"/>
    <property type="evidence" value="ECO:0007669"/>
    <property type="project" value="TreeGrafter"/>
</dbReference>
<dbReference type="GO" id="GO:0070180">
    <property type="term" value="F:large ribosomal subunit rRNA binding"/>
    <property type="evidence" value="ECO:0007669"/>
    <property type="project" value="UniProtKB-UniRule"/>
</dbReference>
<dbReference type="GO" id="GO:0003735">
    <property type="term" value="F:structural constituent of ribosome"/>
    <property type="evidence" value="ECO:0007669"/>
    <property type="project" value="InterPro"/>
</dbReference>
<dbReference type="GO" id="GO:0006412">
    <property type="term" value="P:translation"/>
    <property type="evidence" value="ECO:0007669"/>
    <property type="project" value="UniProtKB-UniRule"/>
</dbReference>
<dbReference type="CDD" id="cd00349">
    <property type="entry name" value="Ribosomal_L11"/>
    <property type="match status" value="1"/>
</dbReference>
<dbReference type="FunFam" id="1.10.10.250:FF:000001">
    <property type="entry name" value="50S ribosomal protein L11"/>
    <property type="match status" value="1"/>
</dbReference>
<dbReference type="FunFam" id="3.30.1550.10:FF:000001">
    <property type="entry name" value="50S ribosomal protein L11"/>
    <property type="match status" value="1"/>
</dbReference>
<dbReference type="Gene3D" id="1.10.10.250">
    <property type="entry name" value="Ribosomal protein L11, C-terminal domain"/>
    <property type="match status" value="1"/>
</dbReference>
<dbReference type="Gene3D" id="3.30.1550.10">
    <property type="entry name" value="Ribosomal protein L11/L12, N-terminal domain"/>
    <property type="match status" value="1"/>
</dbReference>
<dbReference type="HAMAP" id="MF_00736">
    <property type="entry name" value="Ribosomal_uL11"/>
    <property type="match status" value="1"/>
</dbReference>
<dbReference type="InterPro" id="IPR000911">
    <property type="entry name" value="Ribosomal_uL11"/>
</dbReference>
<dbReference type="InterPro" id="IPR006519">
    <property type="entry name" value="Ribosomal_uL11_bac-typ"/>
</dbReference>
<dbReference type="InterPro" id="IPR020783">
    <property type="entry name" value="Ribosomal_uL11_C"/>
</dbReference>
<dbReference type="InterPro" id="IPR036769">
    <property type="entry name" value="Ribosomal_uL11_C_sf"/>
</dbReference>
<dbReference type="InterPro" id="IPR020785">
    <property type="entry name" value="Ribosomal_uL11_CS"/>
</dbReference>
<dbReference type="InterPro" id="IPR020784">
    <property type="entry name" value="Ribosomal_uL11_N"/>
</dbReference>
<dbReference type="InterPro" id="IPR036796">
    <property type="entry name" value="Ribosomal_uL11_N_sf"/>
</dbReference>
<dbReference type="NCBIfam" id="TIGR01632">
    <property type="entry name" value="L11_bact"/>
    <property type="match status" value="1"/>
</dbReference>
<dbReference type="PANTHER" id="PTHR11661">
    <property type="entry name" value="60S RIBOSOMAL PROTEIN L12"/>
    <property type="match status" value="1"/>
</dbReference>
<dbReference type="PANTHER" id="PTHR11661:SF1">
    <property type="entry name" value="LARGE RIBOSOMAL SUBUNIT PROTEIN UL11M"/>
    <property type="match status" value="1"/>
</dbReference>
<dbReference type="Pfam" id="PF00298">
    <property type="entry name" value="Ribosomal_L11"/>
    <property type="match status" value="1"/>
</dbReference>
<dbReference type="Pfam" id="PF03946">
    <property type="entry name" value="Ribosomal_L11_N"/>
    <property type="match status" value="1"/>
</dbReference>
<dbReference type="SMART" id="SM00649">
    <property type="entry name" value="RL11"/>
    <property type="match status" value="1"/>
</dbReference>
<dbReference type="SUPFAM" id="SSF54747">
    <property type="entry name" value="Ribosomal L11/L12e N-terminal domain"/>
    <property type="match status" value="1"/>
</dbReference>
<dbReference type="SUPFAM" id="SSF46906">
    <property type="entry name" value="Ribosomal protein L11, C-terminal domain"/>
    <property type="match status" value="1"/>
</dbReference>
<dbReference type="PROSITE" id="PS00359">
    <property type="entry name" value="RIBOSOMAL_L11"/>
    <property type="match status" value="1"/>
</dbReference>
<name>RL11_XANC8</name>
<reference key="1">
    <citation type="journal article" date="2005" name="Genome Res.">
        <title>Comparative and functional genomic analyses of the pathogenicity of phytopathogen Xanthomonas campestris pv. campestris.</title>
        <authorList>
            <person name="Qian W."/>
            <person name="Jia Y."/>
            <person name="Ren S.-X."/>
            <person name="He Y.-Q."/>
            <person name="Feng J.-X."/>
            <person name="Lu L.-F."/>
            <person name="Sun Q."/>
            <person name="Ying G."/>
            <person name="Tang D.-J."/>
            <person name="Tang H."/>
            <person name="Wu W."/>
            <person name="Hao P."/>
            <person name="Wang L."/>
            <person name="Jiang B.-L."/>
            <person name="Zeng S."/>
            <person name="Gu W.-Y."/>
            <person name="Lu G."/>
            <person name="Rong L."/>
            <person name="Tian Y."/>
            <person name="Yao Z."/>
            <person name="Fu G."/>
            <person name="Chen B."/>
            <person name="Fang R."/>
            <person name="Qiang B."/>
            <person name="Chen Z."/>
            <person name="Zhao G.-P."/>
            <person name="Tang J.-L."/>
            <person name="He C."/>
        </authorList>
    </citation>
    <scope>NUCLEOTIDE SEQUENCE [LARGE SCALE GENOMIC DNA]</scope>
    <source>
        <strain>8004</strain>
    </source>
</reference>
<sequence length="142" mass="14832">MAKKVVALIKLQVKAGQANPAPPVGPALGQRGLNIMEFCKAFNAATSKLEPGLPTPVIITAYSDRTFTFITKSTPASVLLKKAAGVSSGSKRPNTDKVGKVTRKQLEEIVKVKEADLTAAELEAAVRTIAGSARSMGLTVEG</sequence>
<proteinExistence type="inferred from homology"/>
<protein>
    <recommendedName>
        <fullName evidence="1">Large ribosomal subunit protein uL11</fullName>
    </recommendedName>
    <alternativeName>
        <fullName evidence="2">50S ribosomal protein L11</fullName>
    </alternativeName>
</protein>
<evidence type="ECO:0000255" key="1">
    <source>
        <dbReference type="HAMAP-Rule" id="MF_00736"/>
    </source>
</evidence>
<evidence type="ECO:0000305" key="2"/>